<dbReference type="EMBL" id="AY317124">
    <property type="protein sequence ID" value="AAQ83574.1"/>
    <property type="molecule type" value="Genomic_DNA"/>
</dbReference>
<dbReference type="EMBL" id="AF527990">
    <property type="protein sequence ID" value="AAP30878.1"/>
    <property type="molecule type" value="mRNA"/>
</dbReference>
<dbReference type="RefSeq" id="NP_999469.1">
    <property type="nucleotide sequence ID" value="NM_214304.1"/>
</dbReference>
<dbReference type="SMR" id="Q64L94"/>
<dbReference type="FunCoup" id="Q64L94">
    <property type="interactions" value="1467"/>
</dbReference>
<dbReference type="STRING" id="9823.ENSSSCP00000002192"/>
<dbReference type="PaxDb" id="9823-ENSSSCP00000002192"/>
<dbReference type="PeptideAtlas" id="Q64L94"/>
<dbReference type="Ensembl" id="ENSSSCT00015041951.1">
    <property type="protein sequence ID" value="ENSSSCP00015016569.1"/>
    <property type="gene ID" value="ENSSSCG00015030054.1"/>
</dbReference>
<dbReference type="Ensembl" id="ENSSSCT00030087806.1">
    <property type="protein sequence ID" value="ENSSSCP00030040576.1"/>
    <property type="gene ID" value="ENSSSCG00030062637.1"/>
</dbReference>
<dbReference type="Ensembl" id="ENSSSCT00050108041.1">
    <property type="protein sequence ID" value="ENSSSCP00050047858.1"/>
    <property type="gene ID" value="ENSSSCG00050078329.1"/>
</dbReference>
<dbReference type="Ensembl" id="ENSSSCT00060013032.1">
    <property type="protein sequence ID" value="ENSSSCP00060004944.1"/>
    <property type="gene ID" value="ENSSSCG00060010044.1"/>
</dbReference>
<dbReference type="GeneID" id="397572"/>
<dbReference type="KEGG" id="ssc:397572"/>
<dbReference type="CTD" id="5720"/>
<dbReference type="eggNOG" id="KOG4470">
    <property type="taxonomic scope" value="Eukaryota"/>
</dbReference>
<dbReference type="InParanoid" id="Q64L94"/>
<dbReference type="OrthoDB" id="6591885at2759"/>
<dbReference type="Reactome" id="R-SSC-9907900">
    <property type="pathway name" value="Proteasome assembly"/>
</dbReference>
<dbReference type="Proteomes" id="UP000008227">
    <property type="component" value="Unplaced"/>
</dbReference>
<dbReference type="Proteomes" id="UP000314985">
    <property type="component" value="Unplaced"/>
</dbReference>
<dbReference type="Proteomes" id="UP000694570">
    <property type="component" value="Unplaced"/>
</dbReference>
<dbReference type="Proteomes" id="UP000694571">
    <property type="component" value="Unplaced"/>
</dbReference>
<dbReference type="Proteomes" id="UP000694720">
    <property type="component" value="Unplaced"/>
</dbReference>
<dbReference type="Proteomes" id="UP000694722">
    <property type="component" value="Unplaced"/>
</dbReference>
<dbReference type="Proteomes" id="UP000694723">
    <property type="component" value="Unplaced"/>
</dbReference>
<dbReference type="Proteomes" id="UP000694724">
    <property type="component" value="Unplaced"/>
</dbReference>
<dbReference type="Proteomes" id="UP000694725">
    <property type="component" value="Unplaced"/>
</dbReference>
<dbReference type="Proteomes" id="UP000694726">
    <property type="component" value="Unplaced"/>
</dbReference>
<dbReference type="Proteomes" id="UP000694727">
    <property type="component" value="Unplaced"/>
</dbReference>
<dbReference type="Proteomes" id="UP000694728">
    <property type="component" value="Unplaced"/>
</dbReference>
<dbReference type="GO" id="GO:0005737">
    <property type="term" value="C:cytoplasm"/>
    <property type="evidence" value="ECO:0000318"/>
    <property type="project" value="GO_Central"/>
</dbReference>
<dbReference type="GO" id="GO:0005654">
    <property type="term" value="C:nucleoplasm"/>
    <property type="evidence" value="ECO:0000318"/>
    <property type="project" value="GO_Central"/>
</dbReference>
<dbReference type="GO" id="GO:0008537">
    <property type="term" value="C:proteasome activator complex"/>
    <property type="evidence" value="ECO:0007669"/>
    <property type="project" value="InterPro"/>
</dbReference>
<dbReference type="GO" id="GO:0061133">
    <property type="term" value="F:endopeptidase activator activity"/>
    <property type="evidence" value="ECO:0000318"/>
    <property type="project" value="GO_Central"/>
</dbReference>
<dbReference type="GO" id="GO:2000045">
    <property type="term" value="P:regulation of G1/S transition of mitotic cell cycle"/>
    <property type="evidence" value="ECO:0000318"/>
    <property type="project" value="GO_Central"/>
</dbReference>
<dbReference type="GO" id="GO:0061136">
    <property type="term" value="P:regulation of proteasomal protein catabolic process"/>
    <property type="evidence" value="ECO:0000318"/>
    <property type="project" value="GO_Central"/>
</dbReference>
<dbReference type="FunFam" id="1.20.120.180:FF:000002">
    <property type="entry name" value="Proteasome activator complex subunit 1"/>
    <property type="match status" value="1"/>
</dbReference>
<dbReference type="FunFam" id="1.20.5.120:FF:000001">
    <property type="entry name" value="Proteasome activator complex subunit 3"/>
    <property type="match status" value="1"/>
</dbReference>
<dbReference type="Gene3D" id="1.20.120.180">
    <property type="entry name" value="Proteasome activator pa28, C-terminal domain"/>
    <property type="match status" value="1"/>
</dbReference>
<dbReference type="Gene3D" id="1.20.5.120">
    <property type="entry name" value="Proteasome activator pa28, N-terminal domain"/>
    <property type="match status" value="1"/>
</dbReference>
<dbReference type="InterPro" id="IPR003186">
    <property type="entry name" value="PA28_C"/>
</dbReference>
<dbReference type="InterPro" id="IPR036997">
    <property type="entry name" value="PA28_C_sf"/>
</dbReference>
<dbReference type="InterPro" id="IPR036996">
    <property type="entry name" value="PA28_N_sf"/>
</dbReference>
<dbReference type="InterPro" id="IPR009077">
    <property type="entry name" value="Proteasome_activ_PA28"/>
</dbReference>
<dbReference type="InterPro" id="IPR003185">
    <property type="entry name" value="Proteasome_activ_PA28_N"/>
</dbReference>
<dbReference type="InterPro" id="IPR036252">
    <property type="entry name" value="Proteasome_activ_sf"/>
</dbReference>
<dbReference type="PANTHER" id="PTHR10660:SF5">
    <property type="entry name" value="PROTEASOME ACTIVATOR COMPLEX SUBUNIT 1"/>
    <property type="match status" value="1"/>
</dbReference>
<dbReference type="PANTHER" id="PTHR10660">
    <property type="entry name" value="PROTEASOME REGULATOR PA28"/>
    <property type="match status" value="1"/>
</dbReference>
<dbReference type="Pfam" id="PF02252">
    <property type="entry name" value="PA28_C"/>
    <property type="match status" value="1"/>
</dbReference>
<dbReference type="Pfam" id="PF02251">
    <property type="entry name" value="PA28_N"/>
    <property type="match status" value="1"/>
</dbReference>
<dbReference type="SUPFAM" id="SSF47216">
    <property type="entry name" value="Proteasome activator"/>
    <property type="match status" value="1"/>
</dbReference>
<reference key="1">
    <citation type="journal article" date="2004" name="Anim. Genet.">
        <title>Sequence characterization, polymorphism and chromosomal localizations of the porcine PSME1 and PSME2 genes.</title>
        <authorList>
            <person name="Wang Y.F."/>
            <person name="Yu M."/>
            <person name="te Pas M.F.W."/>
            <person name="Yerle M."/>
            <person name="Liu B."/>
            <person name="Fan B."/>
            <person name="Xiong T.A."/>
            <person name="Li K."/>
        </authorList>
    </citation>
    <scope>NUCLEOTIDE SEQUENCE [GENOMIC DNA / MRNA]</scope>
    <scope>VARIANTS ILE-146; LEU-220 AND GLY-228</scope>
</reference>
<protein>
    <recommendedName>
        <fullName>Proteasome activator complex subunit 1</fullName>
    </recommendedName>
    <alternativeName>
        <fullName>Proteasome activator 28 subunit alpha</fullName>
        <shortName>PA28a</shortName>
        <shortName>PA28alpha</shortName>
    </alternativeName>
</protein>
<gene>
    <name type="primary">PSME1</name>
</gene>
<organism>
    <name type="scientific">Sus scrofa</name>
    <name type="common">Pig</name>
    <dbReference type="NCBI Taxonomy" id="9823"/>
    <lineage>
        <taxon>Eukaryota</taxon>
        <taxon>Metazoa</taxon>
        <taxon>Chordata</taxon>
        <taxon>Craniata</taxon>
        <taxon>Vertebrata</taxon>
        <taxon>Euteleostomi</taxon>
        <taxon>Mammalia</taxon>
        <taxon>Eutheria</taxon>
        <taxon>Laurasiatheria</taxon>
        <taxon>Artiodactyla</taxon>
        <taxon>Suina</taxon>
        <taxon>Suidae</taxon>
        <taxon>Sus</taxon>
    </lineage>
</organism>
<proteinExistence type="evidence at transcript level"/>
<feature type="chain" id="PRO_0000161782" description="Proteasome activator complex subunit 1">
    <location>
        <begin position="1"/>
        <end position="249"/>
    </location>
</feature>
<feature type="region of interest" description="Disordered" evidence="2">
    <location>
        <begin position="60"/>
        <end position="102"/>
    </location>
</feature>
<feature type="compositionally biased region" description="Basic and acidic residues" evidence="2">
    <location>
        <begin position="68"/>
        <end position="98"/>
    </location>
</feature>
<feature type="sequence variant" evidence="3">
    <original>N</original>
    <variation>I</variation>
    <location>
        <position position="146"/>
    </location>
</feature>
<feature type="sequence variant" evidence="3">
    <original>R</original>
    <variation>L</variation>
    <location>
        <position position="220"/>
    </location>
</feature>
<feature type="sequence variant" evidence="3">
    <original>D</original>
    <variation>G</variation>
    <location>
        <position position="228"/>
    </location>
</feature>
<accession>Q64L94</accession>
<accession>Q863Z1</accession>
<keyword id="KW-0647">Proteasome</keyword>
<keyword id="KW-1185">Reference proteome</keyword>
<sequence length="249" mass="28617">MAALRVQPEAQAKVDVFREDLCTKTENLLGSYFPKKISELDAFLKEPALNEANLSNLKAPLDIPVPDPVKEKEKEERKKQQEKEDKDEKKKGEDEDKGPPCGPVNCNEKIVVLLQRLKPEIKDVIEQLNLVTTWLQLQIPRIEDGNNFGVAVQEKVFELMTALHTKLEGFHTQISKYFSERGDAVAKAAKQPHVGDYRQLVHELDEAEYRDIRLMVMEIRNAYAVLYDIILKNFEKLKKPRGETKGMIY</sequence>
<name>PSME1_PIG</name>
<evidence type="ECO:0000250" key="1"/>
<evidence type="ECO:0000256" key="2">
    <source>
        <dbReference type="SAM" id="MobiDB-lite"/>
    </source>
</evidence>
<evidence type="ECO:0000269" key="3">
    <source>
    </source>
</evidence>
<evidence type="ECO:0000305" key="4"/>
<comment type="function">
    <text evidence="1">Implicated in immunoproteasome assembly and required for efficient antigen processing. The PA28 activator complex enhances the generation of class I binding peptides by altering the cleavage pattern of the proteasome (By similarity).</text>
</comment>
<comment type="subunit">
    <text evidence="1">Heterodimer of PSME1 and PSME2, which forms a hexameric ring. PSME1 can form homoheptamers (By similarity).</text>
</comment>
<comment type="similarity">
    <text evidence="4">Belongs to the PA28 family.</text>
</comment>